<keyword id="KW-1185">Reference proteome</keyword>
<keyword id="KW-0687">Ribonucleoprotein</keyword>
<keyword id="KW-0689">Ribosomal protein</keyword>
<keyword id="KW-0694">RNA-binding</keyword>
<keyword id="KW-0699">rRNA-binding</keyword>
<feature type="chain" id="PRO_1000053090" description="Large ribosomal subunit protein uL18">
    <location>
        <begin position="1"/>
        <end position="116"/>
    </location>
</feature>
<proteinExistence type="inferred from homology"/>
<comment type="function">
    <text evidence="1">This is one of the proteins that bind and probably mediate the attachment of the 5S RNA into the large ribosomal subunit, where it forms part of the central protuberance.</text>
</comment>
<comment type="subunit">
    <text evidence="1">Part of the 50S ribosomal subunit; part of the 5S rRNA/L5/L18/L25 subcomplex. Contacts the 5S and 23S rRNAs.</text>
</comment>
<comment type="similarity">
    <text evidence="1">Belongs to the universal ribosomal protein uL18 family.</text>
</comment>
<evidence type="ECO:0000255" key="1">
    <source>
        <dbReference type="HAMAP-Rule" id="MF_01337"/>
    </source>
</evidence>
<evidence type="ECO:0000305" key="2"/>
<accession>A1T0C6</accession>
<dbReference type="EMBL" id="CP000510">
    <property type="protein sequence ID" value="ABM05191.1"/>
    <property type="molecule type" value="Genomic_DNA"/>
</dbReference>
<dbReference type="RefSeq" id="WP_011771739.1">
    <property type="nucleotide sequence ID" value="NC_008709.1"/>
</dbReference>
<dbReference type="SMR" id="A1T0C6"/>
<dbReference type="STRING" id="357804.Ping_3508"/>
<dbReference type="KEGG" id="pin:Ping_3508"/>
<dbReference type="eggNOG" id="COG0256">
    <property type="taxonomic scope" value="Bacteria"/>
</dbReference>
<dbReference type="HOGENOM" id="CLU_098841_0_1_6"/>
<dbReference type="OrthoDB" id="9810939at2"/>
<dbReference type="Proteomes" id="UP000000639">
    <property type="component" value="Chromosome"/>
</dbReference>
<dbReference type="GO" id="GO:0022625">
    <property type="term" value="C:cytosolic large ribosomal subunit"/>
    <property type="evidence" value="ECO:0007669"/>
    <property type="project" value="TreeGrafter"/>
</dbReference>
<dbReference type="GO" id="GO:0008097">
    <property type="term" value="F:5S rRNA binding"/>
    <property type="evidence" value="ECO:0007669"/>
    <property type="project" value="TreeGrafter"/>
</dbReference>
<dbReference type="GO" id="GO:0003735">
    <property type="term" value="F:structural constituent of ribosome"/>
    <property type="evidence" value="ECO:0007669"/>
    <property type="project" value="InterPro"/>
</dbReference>
<dbReference type="GO" id="GO:0006412">
    <property type="term" value="P:translation"/>
    <property type="evidence" value="ECO:0007669"/>
    <property type="project" value="UniProtKB-UniRule"/>
</dbReference>
<dbReference type="CDD" id="cd00432">
    <property type="entry name" value="Ribosomal_L18_L5e"/>
    <property type="match status" value="1"/>
</dbReference>
<dbReference type="FunFam" id="3.30.420.100:FF:000001">
    <property type="entry name" value="50S ribosomal protein L18"/>
    <property type="match status" value="1"/>
</dbReference>
<dbReference type="Gene3D" id="3.30.420.100">
    <property type="match status" value="1"/>
</dbReference>
<dbReference type="HAMAP" id="MF_01337_B">
    <property type="entry name" value="Ribosomal_uL18_B"/>
    <property type="match status" value="1"/>
</dbReference>
<dbReference type="InterPro" id="IPR004389">
    <property type="entry name" value="Ribosomal_uL18_bac-type"/>
</dbReference>
<dbReference type="InterPro" id="IPR005484">
    <property type="entry name" value="Ribosomal_uL18_bac/euk"/>
</dbReference>
<dbReference type="NCBIfam" id="TIGR00060">
    <property type="entry name" value="L18_bact"/>
    <property type="match status" value="1"/>
</dbReference>
<dbReference type="PANTHER" id="PTHR12899">
    <property type="entry name" value="39S RIBOSOMAL PROTEIN L18, MITOCHONDRIAL"/>
    <property type="match status" value="1"/>
</dbReference>
<dbReference type="PANTHER" id="PTHR12899:SF3">
    <property type="entry name" value="LARGE RIBOSOMAL SUBUNIT PROTEIN UL18M"/>
    <property type="match status" value="1"/>
</dbReference>
<dbReference type="Pfam" id="PF00861">
    <property type="entry name" value="Ribosomal_L18p"/>
    <property type="match status" value="1"/>
</dbReference>
<dbReference type="SUPFAM" id="SSF53137">
    <property type="entry name" value="Translational machinery components"/>
    <property type="match status" value="1"/>
</dbReference>
<sequence>MDKKASRLRRATRTRKKLQELGATRLVINRTPRHTYAQVITADAQVVASASTLEKEVRAQISNGGNKEAAQLIGKLVAERAVEKGISKISFDRSGFQYHGRVAALAEAAREAGLQF</sequence>
<reference key="1">
    <citation type="journal article" date="2008" name="BMC Genomics">
        <title>Genomics of an extreme psychrophile, Psychromonas ingrahamii.</title>
        <authorList>
            <person name="Riley M."/>
            <person name="Staley J.T."/>
            <person name="Danchin A."/>
            <person name="Wang T.Z."/>
            <person name="Brettin T.S."/>
            <person name="Hauser L.J."/>
            <person name="Land M.L."/>
            <person name="Thompson L.S."/>
        </authorList>
    </citation>
    <scope>NUCLEOTIDE SEQUENCE [LARGE SCALE GENOMIC DNA]</scope>
    <source>
        <strain>DSM 17664 / CCUG 51855 / 37</strain>
    </source>
</reference>
<organism>
    <name type="scientific">Psychromonas ingrahamii (strain DSM 17664 / CCUG 51855 / 37)</name>
    <dbReference type="NCBI Taxonomy" id="357804"/>
    <lineage>
        <taxon>Bacteria</taxon>
        <taxon>Pseudomonadati</taxon>
        <taxon>Pseudomonadota</taxon>
        <taxon>Gammaproteobacteria</taxon>
        <taxon>Alteromonadales</taxon>
        <taxon>Psychromonadaceae</taxon>
        <taxon>Psychromonas</taxon>
    </lineage>
</organism>
<protein>
    <recommendedName>
        <fullName evidence="1">Large ribosomal subunit protein uL18</fullName>
    </recommendedName>
    <alternativeName>
        <fullName evidence="2">50S ribosomal protein L18</fullName>
    </alternativeName>
</protein>
<gene>
    <name evidence="1" type="primary">rplR</name>
    <name type="ordered locus">Ping_3508</name>
</gene>
<name>RL18_PSYIN</name>